<gene>
    <name evidence="1" type="primary">mdh</name>
    <name type="ordered locus">Tfu_0092</name>
</gene>
<proteinExistence type="inferred from homology"/>
<sequence>MAKAPVNVTVTGAAGQIGYALLFRIASGQLLGVDTPVRLRLLEIPQAIKAAEGTAMELDDCAFPLLAGVDIYDDPRKAFDGVNVALLVGARPRTKGMERRDLLEANGGIFGPQGAAINDGAADDVRVLVVGNPANTNALIAQAHAPDIPADRFTAMTRLDHNRALSQLAAKLNVSVSDIKKLTIWGNHSATQYPDIFHAEVNGRSAVEAVNDEEWLRDTFIPTVAKRGAAIIEARGASSAASAANAAIDHVYDWVNGTPEGDWTSVALPSDGSYGVPEGLVSSFPVVSRNGSWEIVQGLEINEFSRERIDASVRELEEEREAVRALGLIK</sequence>
<evidence type="ECO:0000255" key="1">
    <source>
        <dbReference type="HAMAP-Rule" id="MF_01517"/>
    </source>
</evidence>
<feature type="chain" id="PRO_0000113396" description="Malate dehydrogenase">
    <location>
        <begin position="1"/>
        <end position="330"/>
    </location>
</feature>
<feature type="active site" description="Proton acceptor" evidence="1">
    <location>
        <position position="188"/>
    </location>
</feature>
<feature type="binding site" evidence="1">
    <location>
        <begin position="12"/>
        <end position="18"/>
    </location>
    <ligand>
        <name>NAD(+)</name>
        <dbReference type="ChEBI" id="CHEBI:57540"/>
    </ligand>
</feature>
<feature type="binding site" evidence="1">
    <location>
        <position position="93"/>
    </location>
    <ligand>
        <name>substrate</name>
    </ligand>
</feature>
<feature type="binding site" evidence="1">
    <location>
        <position position="99"/>
    </location>
    <ligand>
        <name>substrate</name>
    </ligand>
</feature>
<feature type="binding site" evidence="1">
    <location>
        <position position="106"/>
    </location>
    <ligand>
        <name>NAD(+)</name>
        <dbReference type="ChEBI" id="CHEBI:57540"/>
    </ligand>
</feature>
<feature type="binding site" evidence="1">
    <location>
        <position position="113"/>
    </location>
    <ligand>
        <name>NAD(+)</name>
        <dbReference type="ChEBI" id="CHEBI:57540"/>
    </ligand>
</feature>
<feature type="binding site" evidence="1">
    <location>
        <begin position="130"/>
        <end position="132"/>
    </location>
    <ligand>
        <name>NAD(+)</name>
        <dbReference type="ChEBI" id="CHEBI:57540"/>
    </ligand>
</feature>
<feature type="binding site" evidence="1">
    <location>
        <position position="132"/>
    </location>
    <ligand>
        <name>substrate</name>
    </ligand>
</feature>
<feature type="binding site" evidence="1">
    <location>
        <position position="163"/>
    </location>
    <ligand>
        <name>substrate</name>
    </ligand>
</feature>
<name>MDH_THEFY</name>
<reference key="1">
    <citation type="journal article" date="2007" name="J. Bacteriol.">
        <title>Genome sequence and analysis of the soil cellulolytic actinomycete Thermobifida fusca YX.</title>
        <authorList>
            <person name="Lykidis A."/>
            <person name="Mavromatis K."/>
            <person name="Ivanova N."/>
            <person name="Anderson I."/>
            <person name="Land M."/>
            <person name="DiBartolo G."/>
            <person name="Martinez M."/>
            <person name="Lapidus A."/>
            <person name="Lucas S."/>
            <person name="Copeland A."/>
            <person name="Richardson P."/>
            <person name="Wilson D.B."/>
            <person name="Kyrpides N."/>
        </authorList>
    </citation>
    <scope>NUCLEOTIDE SEQUENCE [LARGE SCALE GENOMIC DNA]</scope>
    <source>
        <strain>YX</strain>
    </source>
</reference>
<keyword id="KW-0520">NAD</keyword>
<keyword id="KW-0560">Oxidoreductase</keyword>
<keyword id="KW-0816">Tricarboxylic acid cycle</keyword>
<organism>
    <name type="scientific">Thermobifida fusca (strain YX)</name>
    <dbReference type="NCBI Taxonomy" id="269800"/>
    <lineage>
        <taxon>Bacteria</taxon>
        <taxon>Bacillati</taxon>
        <taxon>Actinomycetota</taxon>
        <taxon>Actinomycetes</taxon>
        <taxon>Streptosporangiales</taxon>
        <taxon>Nocardiopsidaceae</taxon>
        <taxon>Thermobifida</taxon>
    </lineage>
</organism>
<protein>
    <recommendedName>
        <fullName evidence="1">Malate dehydrogenase</fullName>
        <ecNumber evidence="1">1.1.1.37</ecNumber>
    </recommendedName>
</protein>
<accession>Q47TT4</accession>
<comment type="function">
    <text evidence="1">Catalyzes the reversible oxidation of malate to oxaloacetate.</text>
</comment>
<comment type="catalytic activity">
    <reaction evidence="1">
        <text>(S)-malate + NAD(+) = oxaloacetate + NADH + H(+)</text>
        <dbReference type="Rhea" id="RHEA:21432"/>
        <dbReference type="ChEBI" id="CHEBI:15378"/>
        <dbReference type="ChEBI" id="CHEBI:15589"/>
        <dbReference type="ChEBI" id="CHEBI:16452"/>
        <dbReference type="ChEBI" id="CHEBI:57540"/>
        <dbReference type="ChEBI" id="CHEBI:57945"/>
        <dbReference type="EC" id="1.1.1.37"/>
    </reaction>
</comment>
<comment type="similarity">
    <text evidence="1">Belongs to the LDH/MDH superfamily. MDH type 2 family.</text>
</comment>
<dbReference type="EC" id="1.1.1.37" evidence="1"/>
<dbReference type="EMBL" id="CP000088">
    <property type="protein sequence ID" value="AAZ54130.1"/>
    <property type="molecule type" value="Genomic_DNA"/>
</dbReference>
<dbReference type="RefSeq" id="WP_011290539.1">
    <property type="nucleotide sequence ID" value="NC_007333.1"/>
</dbReference>
<dbReference type="SMR" id="Q47TT4"/>
<dbReference type="STRING" id="269800.Tfu_0092"/>
<dbReference type="KEGG" id="tfu:Tfu_0092"/>
<dbReference type="eggNOG" id="COG0039">
    <property type="taxonomic scope" value="Bacteria"/>
</dbReference>
<dbReference type="HOGENOM" id="CLU_040727_2_0_11"/>
<dbReference type="OrthoDB" id="9802969at2"/>
<dbReference type="GO" id="GO:0030060">
    <property type="term" value="F:L-malate dehydrogenase (NAD+) activity"/>
    <property type="evidence" value="ECO:0007669"/>
    <property type="project" value="UniProtKB-UniRule"/>
</dbReference>
<dbReference type="GO" id="GO:0006108">
    <property type="term" value="P:malate metabolic process"/>
    <property type="evidence" value="ECO:0007669"/>
    <property type="project" value="InterPro"/>
</dbReference>
<dbReference type="GO" id="GO:0006099">
    <property type="term" value="P:tricarboxylic acid cycle"/>
    <property type="evidence" value="ECO:0007669"/>
    <property type="project" value="UniProtKB-UniRule"/>
</dbReference>
<dbReference type="CDD" id="cd01338">
    <property type="entry name" value="MDH_chloroplast-like"/>
    <property type="match status" value="1"/>
</dbReference>
<dbReference type="FunFam" id="3.40.50.720:FF:000010">
    <property type="entry name" value="Malate dehydrogenase"/>
    <property type="match status" value="1"/>
</dbReference>
<dbReference type="FunFam" id="3.90.110.10:FF:000002">
    <property type="entry name" value="Malate dehydrogenase"/>
    <property type="match status" value="1"/>
</dbReference>
<dbReference type="Gene3D" id="3.90.110.10">
    <property type="entry name" value="Lactate dehydrogenase/glycoside hydrolase, family 4, C-terminal"/>
    <property type="match status" value="1"/>
</dbReference>
<dbReference type="Gene3D" id="3.40.50.720">
    <property type="entry name" value="NAD(P)-binding Rossmann-like Domain"/>
    <property type="match status" value="1"/>
</dbReference>
<dbReference type="HAMAP" id="MF_01517">
    <property type="entry name" value="Malate_dehydrog_2"/>
    <property type="match status" value="1"/>
</dbReference>
<dbReference type="InterPro" id="IPR001557">
    <property type="entry name" value="L-lactate/malate_DH"/>
</dbReference>
<dbReference type="InterPro" id="IPR022383">
    <property type="entry name" value="Lactate/malate_DH_C"/>
</dbReference>
<dbReference type="InterPro" id="IPR001236">
    <property type="entry name" value="Lactate/malate_DH_N"/>
</dbReference>
<dbReference type="InterPro" id="IPR015955">
    <property type="entry name" value="Lactate_DH/Glyco_Ohase_4_C"/>
</dbReference>
<dbReference type="InterPro" id="IPR001252">
    <property type="entry name" value="Malate_DH_AS"/>
</dbReference>
<dbReference type="InterPro" id="IPR010945">
    <property type="entry name" value="Malate_DH_type2"/>
</dbReference>
<dbReference type="InterPro" id="IPR036291">
    <property type="entry name" value="NAD(P)-bd_dom_sf"/>
</dbReference>
<dbReference type="NCBIfam" id="TIGR01759">
    <property type="entry name" value="MalateDH-SF1"/>
    <property type="match status" value="1"/>
</dbReference>
<dbReference type="NCBIfam" id="NF003916">
    <property type="entry name" value="PRK05442.1"/>
    <property type="match status" value="1"/>
</dbReference>
<dbReference type="PANTHER" id="PTHR23382">
    <property type="entry name" value="MALATE DEHYDROGENASE"/>
    <property type="match status" value="1"/>
</dbReference>
<dbReference type="Pfam" id="PF02866">
    <property type="entry name" value="Ldh_1_C"/>
    <property type="match status" value="1"/>
</dbReference>
<dbReference type="Pfam" id="PF00056">
    <property type="entry name" value="Ldh_1_N"/>
    <property type="match status" value="1"/>
</dbReference>
<dbReference type="PIRSF" id="PIRSF000102">
    <property type="entry name" value="Lac_mal_DH"/>
    <property type="match status" value="1"/>
</dbReference>
<dbReference type="SUPFAM" id="SSF56327">
    <property type="entry name" value="LDH C-terminal domain-like"/>
    <property type="match status" value="1"/>
</dbReference>
<dbReference type="SUPFAM" id="SSF51735">
    <property type="entry name" value="NAD(P)-binding Rossmann-fold domains"/>
    <property type="match status" value="1"/>
</dbReference>
<dbReference type="PROSITE" id="PS00068">
    <property type="entry name" value="MDH"/>
    <property type="match status" value="1"/>
</dbReference>